<gene>
    <name evidence="1" type="primary">nusB</name>
    <name type="ordered locus">Deide_12270</name>
</gene>
<accession>C1CVC5</accession>
<sequence length="168" mass="18666">MTRRREKAVQPVGTRRAAREFVFRVLFEADRGDLPLDTVFTRAEGAMREGDDTFPQLSADALTFANELVRGLEKHRADIDTTLRRTIRGWSFDQMAQTDLNVLRLATFELIYTAEPHPPVIESAVRIARKFGGDDSGRFVNGVLAGLSRSLQSAGVAKADEQADTAQD</sequence>
<dbReference type="EMBL" id="CP001114">
    <property type="protein sequence ID" value="ACO46142.1"/>
    <property type="molecule type" value="Genomic_DNA"/>
</dbReference>
<dbReference type="RefSeq" id="WP_012693265.1">
    <property type="nucleotide sequence ID" value="NC_012526.1"/>
</dbReference>
<dbReference type="SMR" id="C1CVC5"/>
<dbReference type="STRING" id="546414.Deide_12270"/>
<dbReference type="PaxDb" id="546414-Deide_12270"/>
<dbReference type="KEGG" id="ddr:Deide_12270"/>
<dbReference type="eggNOG" id="COG0781">
    <property type="taxonomic scope" value="Bacteria"/>
</dbReference>
<dbReference type="HOGENOM" id="CLU_087843_3_0_0"/>
<dbReference type="OrthoDB" id="9811381at2"/>
<dbReference type="Proteomes" id="UP000002208">
    <property type="component" value="Chromosome"/>
</dbReference>
<dbReference type="GO" id="GO:0005829">
    <property type="term" value="C:cytosol"/>
    <property type="evidence" value="ECO:0007669"/>
    <property type="project" value="TreeGrafter"/>
</dbReference>
<dbReference type="GO" id="GO:0003723">
    <property type="term" value="F:RNA binding"/>
    <property type="evidence" value="ECO:0007669"/>
    <property type="project" value="UniProtKB-UniRule"/>
</dbReference>
<dbReference type="GO" id="GO:0006353">
    <property type="term" value="P:DNA-templated transcription termination"/>
    <property type="evidence" value="ECO:0007669"/>
    <property type="project" value="UniProtKB-UniRule"/>
</dbReference>
<dbReference type="GO" id="GO:0031564">
    <property type="term" value="P:transcription antitermination"/>
    <property type="evidence" value="ECO:0007669"/>
    <property type="project" value="UniProtKB-KW"/>
</dbReference>
<dbReference type="CDD" id="cd00619">
    <property type="entry name" value="Terminator_NusB"/>
    <property type="match status" value="1"/>
</dbReference>
<dbReference type="Gene3D" id="1.10.940.10">
    <property type="entry name" value="NusB-like"/>
    <property type="match status" value="1"/>
</dbReference>
<dbReference type="HAMAP" id="MF_00073">
    <property type="entry name" value="NusB"/>
    <property type="match status" value="1"/>
</dbReference>
<dbReference type="InterPro" id="IPR035926">
    <property type="entry name" value="NusB-like_sf"/>
</dbReference>
<dbReference type="InterPro" id="IPR011605">
    <property type="entry name" value="NusB_fam"/>
</dbReference>
<dbReference type="InterPro" id="IPR006027">
    <property type="entry name" value="NusB_RsmB_TIM44"/>
</dbReference>
<dbReference type="NCBIfam" id="TIGR01951">
    <property type="entry name" value="nusB"/>
    <property type="match status" value="1"/>
</dbReference>
<dbReference type="PANTHER" id="PTHR11078:SF3">
    <property type="entry name" value="ANTITERMINATION NUSB DOMAIN-CONTAINING PROTEIN"/>
    <property type="match status" value="1"/>
</dbReference>
<dbReference type="PANTHER" id="PTHR11078">
    <property type="entry name" value="N UTILIZATION SUBSTANCE PROTEIN B-RELATED"/>
    <property type="match status" value="1"/>
</dbReference>
<dbReference type="Pfam" id="PF01029">
    <property type="entry name" value="NusB"/>
    <property type="match status" value="1"/>
</dbReference>
<dbReference type="SUPFAM" id="SSF48013">
    <property type="entry name" value="NusB-like"/>
    <property type="match status" value="1"/>
</dbReference>
<reference key="1">
    <citation type="journal article" date="2009" name="PLoS Genet.">
        <title>Alliance of proteomics and genomics to unravel the specificities of Sahara bacterium Deinococcus deserti.</title>
        <authorList>
            <person name="de Groot A."/>
            <person name="Dulermo R."/>
            <person name="Ortet P."/>
            <person name="Blanchard L."/>
            <person name="Guerin P."/>
            <person name="Fernandez B."/>
            <person name="Vacherie B."/>
            <person name="Dossat C."/>
            <person name="Jolivet E."/>
            <person name="Siguier P."/>
            <person name="Chandler M."/>
            <person name="Barakat M."/>
            <person name="Dedieu A."/>
            <person name="Barbe V."/>
            <person name="Heulin T."/>
            <person name="Sommer S."/>
            <person name="Achouak W."/>
            <person name="Armengaud J."/>
        </authorList>
    </citation>
    <scope>NUCLEOTIDE SEQUENCE [LARGE SCALE GENOMIC DNA]</scope>
    <source>
        <strain>DSM 17065 / CIP 109153 / LMG 22923 / VCD115</strain>
    </source>
</reference>
<feature type="chain" id="PRO_1000202475" description="Transcription antitermination protein NusB">
    <location>
        <begin position="1"/>
        <end position="168"/>
    </location>
</feature>
<comment type="function">
    <text evidence="1">Involved in transcription antitermination. Required for transcription of ribosomal RNA (rRNA) genes. Binds specifically to the boxA antiterminator sequence of the ribosomal RNA (rrn) operons.</text>
</comment>
<comment type="similarity">
    <text evidence="1">Belongs to the NusB family.</text>
</comment>
<proteinExistence type="inferred from homology"/>
<evidence type="ECO:0000255" key="1">
    <source>
        <dbReference type="HAMAP-Rule" id="MF_00073"/>
    </source>
</evidence>
<name>NUSB_DEIDV</name>
<keyword id="KW-1185">Reference proteome</keyword>
<keyword id="KW-0694">RNA-binding</keyword>
<keyword id="KW-0804">Transcription</keyword>
<keyword id="KW-0889">Transcription antitermination</keyword>
<keyword id="KW-0805">Transcription regulation</keyword>
<protein>
    <recommendedName>
        <fullName evidence="1">Transcription antitermination protein NusB</fullName>
    </recommendedName>
    <alternativeName>
        <fullName evidence="1">Antitermination factor NusB</fullName>
    </alternativeName>
</protein>
<organism>
    <name type="scientific">Deinococcus deserti (strain DSM 17065 / CIP 109153 / LMG 22923 / VCD115)</name>
    <dbReference type="NCBI Taxonomy" id="546414"/>
    <lineage>
        <taxon>Bacteria</taxon>
        <taxon>Thermotogati</taxon>
        <taxon>Deinococcota</taxon>
        <taxon>Deinococci</taxon>
        <taxon>Deinococcales</taxon>
        <taxon>Deinococcaceae</taxon>
        <taxon>Deinococcus</taxon>
    </lineage>
</organism>